<accession>A9AR15</accession>
<feature type="chain" id="PRO_1000129877" description="Acetoacetate decarboxylase">
    <location>
        <begin position="1"/>
        <end position="246"/>
    </location>
</feature>
<feature type="active site" description="Schiff-base intermediate with acetoacetate" evidence="1">
    <location>
        <position position="116"/>
    </location>
</feature>
<reference key="1">
    <citation type="submission" date="2007-10" db="EMBL/GenBank/DDBJ databases">
        <title>Complete sequence of chromosome 2 of Burkholderia multivorans ATCC 17616.</title>
        <authorList>
            <person name="Copeland A."/>
            <person name="Lucas S."/>
            <person name="Lapidus A."/>
            <person name="Barry K."/>
            <person name="Glavina del Rio T."/>
            <person name="Dalin E."/>
            <person name="Tice H."/>
            <person name="Pitluck S."/>
            <person name="Chain P."/>
            <person name="Malfatti S."/>
            <person name="Shin M."/>
            <person name="Vergez L."/>
            <person name="Schmutz J."/>
            <person name="Larimer F."/>
            <person name="Land M."/>
            <person name="Hauser L."/>
            <person name="Kyrpides N."/>
            <person name="Kim E."/>
            <person name="Tiedje J."/>
            <person name="Richardson P."/>
        </authorList>
    </citation>
    <scope>NUCLEOTIDE SEQUENCE [LARGE SCALE GENOMIC DNA]</scope>
    <source>
        <strain>ATCC 17616 / 249</strain>
    </source>
</reference>
<reference key="2">
    <citation type="submission" date="2007-04" db="EMBL/GenBank/DDBJ databases">
        <title>Complete genome sequence of Burkholderia multivorans ATCC 17616.</title>
        <authorList>
            <person name="Ohtsubo Y."/>
            <person name="Yamashita A."/>
            <person name="Kurokawa K."/>
            <person name="Takami H."/>
            <person name="Yuhara S."/>
            <person name="Nishiyama E."/>
            <person name="Endo R."/>
            <person name="Miyazaki R."/>
            <person name="Ono A."/>
            <person name="Yano K."/>
            <person name="Ito M."/>
            <person name="Sota M."/>
            <person name="Yuji N."/>
            <person name="Hattori M."/>
            <person name="Tsuda M."/>
        </authorList>
    </citation>
    <scope>NUCLEOTIDE SEQUENCE [LARGE SCALE GENOMIC DNA]</scope>
    <source>
        <strain>ATCC 17616 / 249</strain>
    </source>
</reference>
<name>ADC_BURM1</name>
<comment type="function">
    <text evidence="1">Catalyzes the conversion of acetoacetate to acetone and carbon dioxide.</text>
</comment>
<comment type="catalytic activity">
    <reaction evidence="1">
        <text>acetoacetate + H(+) = acetone + CO2</text>
        <dbReference type="Rhea" id="RHEA:19729"/>
        <dbReference type="ChEBI" id="CHEBI:13705"/>
        <dbReference type="ChEBI" id="CHEBI:15347"/>
        <dbReference type="ChEBI" id="CHEBI:15378"/>
        <dbReference type="ChEBI" id="CHEBI:16526"/>
        <dbReference type="EC" id="4.1.1.4"/>
    </reaction>
</comment>
<comment type="similarity">
    <text evidence="1">Belongs to the ADC family.</text>
</comment>
<proteinExistence type="inferred from homology"/>
<gene>
    <name evidence="1" type="primary">adc</name>
    <name type="ordered locus">Bmul_5311</name>
    <name type="ordered locus">BMULJ_03210</name>
</gene>
<evidence type="ECO:0000255" key="1">
    <source>
        <dbReference type="HAMAP-Rule" id="MF_00597"/>
    </source>
</evidence>
<sequence>MKISDVRSKAFAMPLTSPAFPMGPYRFVDREFLIITYRTDPDRLREIVPEPLKVTEPLVHYEFIRMADSTGFGDYTESGQVIPVEYNGQPGGYTLAMYLDDHPPIAGGRELWGFPKKLASPTLHVNTDHILGTLDYGKVRVATGTMGYKHKELDIVEQAKRLAGPNFLLKIIPHVDGTARVCELVRYYMQDIVMKGAWTGPASLELSPHALAPVADLPVLEIVEARHLVADLTLGLGEVVYDYLAQ</sequence>
<dbReference type="EC" id="4.1.1.4" evidence="1"/>
<dbReference type="EMBL" id="CP000869">
    <property type="protein sequence ID" value="ABX18981.1"/>
    <property type="molecule type" value="Genomic_DNA"/>
</dbReference>
<dbReference type="EMBL" id="AP009386">
    <property type="protein sequence ID" value="BAG45084.1"/>
    <property type="molecule type" value="Genomic_DNA"/>
</dbReference>
<dbReference type="RefSeq" id="WP_006404627.1">
    <property type="nucleotide sequence ID" value="NC_010805.1"/>
</dbReference>
<dbReference type="SMR" id="A9AR15"/>
<dbReference type="STRING" id="395019.BMULJ_03210"/>
<dbReference type="KEGG" id="bmj:BMULJ_03210"/>
<dbReference type="KEGG" id="bmu:Bmul_5311"/>
<dbReference type="eggNOG" id="COG4689">
    <property type="taxonomic scope" value="Bacteria"/>
</dbReference>
<dbReference type="HOGENOM" id="CLU_077089_0_0_4"/>
<dbReference type="Proteomes" id="UP000008815">
    <property type="component" value="Chromosome 2"/>
</dbReference>
<dbReference type="GO" id="GO:0047602">
    <property type="term" value="F:acetoacetate decarboxylase activity"/>
    <property type="evidence" value="ECO:0007669"/>
    <property type="project" value="UniProtKB-UniRule"/>
</dbReference>
<dbReference type="Gene3D" id="2.40.400.10">
    <property type="entry name" value="Acetoacetate decarboxylase-like"/>
    <property type="match status" value="1"/>
</dbReference>
<dbReference type="HAMAP" id="MF_00597">
    <property type="entry name" value="ADC"/>
    <property type="match status" value="1"/>
</dbReference>
<dbReference type="InterPro" id="IPR010451">
    <property type="entry name" value="Acetoacetate_decarboxylase"/>
</dbReference>
<dbReference type="InterPro" id="IPR023653">
    <property type="entry name" value="Acetoacetate_decarboxylase_bac"/>
</dbReference>
<dbReference type="InterPro" id="IPR023375">
    <property type="entry name" value="ADC_dom_sf"/>
</dbReference>
<dbReference type="NCBIfam" id="NF002614">
    <property type="entry name" value="PRK02265.1"/>
    <property type="match status" value="1"/>
</dbReference>
<dbReference type="Pfam" id="PF06314">
    <property type="entry name" value="ADC"/>
    <property type="match status" value="1"/>
</dbReference>
<dbReference type="SUPFAM" id="SSF160104">
    <property type="entry name" value="Acetoacetate decarboxylase-like"/>
    <property type="match status" value="1"/>
</dbReference>
<protein>
    <recommendedName>
        <fullName evidence="1">Acetoacetate decarboxylase</fullName>
        <shortName evidence="1">AAD</shortName>
        <shortName evidence="1">ADC</shortName>
        <ecNumber evidence="1">4.1.1.4</ecNumber>
    </recommendedName>
</protein>
<organism>
    <name type="scientific">Burkholderia multivorans (strain ATCC 17616 / 249)</name>
    <dbReference type="NCBI Taxonomy" id="395019"/>
    <lineage>
        <taxon>Bacteria</taxon>
        <taxon>Pseudomonadati</taxon>
        <taxon>Pseudomonadota</taxon>
        <taxon>Betaproteobacteria</taxon>
        <taxon>Burkholderiales</taxon>
        <taxon>Burkholderiaceae</taxon>
        <taxon>Burkholderia</taxon>
        <taxon>Burkholderia cepacia complex</taxon>
    </lineage>
</organism>
<keyword id="KW-0210">Decarboxylase</keyword>
<keyword id="KW-0456">Lyase</keyword>
<keyword id="KW-1185">Reference proteome</keyword>
<keyword id="KW-0704">Schiff base</keyword>